<dbReference type="EMBL" id="CP000825">
    <property type="protein sequence ID" value="ABV50134.1"/>
    <property type="molecule type" value="Genomic_DNA"/>
</dbReference>
<dbReference type="RefSeq" id="WP_012007267.1">
    <property type="nucleotide sequence ID" value="NC_009840.1"/>
</dbReference>
<dbReference type="SMR" id="A8G3F3"/>
<dbReference type="STRING" id="93060.P9215_05181"/>
<dbReference type="KEGG" id="pmh:P9215_05181"/>
<dbReference type="eggNOG" id="COG2038">
    <property type="taxonomic scope" value="Bacteria"/>
</dbReference>
<dbReference type="HOGENOM" id="CLU_053134_1_0_3"/>
<dbReference type="OrthoDB" id="418257at2"/>
<dbReference type="Proteomes" id="UP000002014">
    <property type="component" value="Chromosome"/>
</dbReference>
<dbReference type="GO" id="GO:0008939">
    <property type="term" value="F:nicotinate-nucleotide-dimethylbenzimidazole phosphoribosyltransferase activity"/>
    <property type="evidence" value="ECO:0007669"/>
    <property type="project" value="InterPro"/>
</dbReference>
<dbReference type="CDD" id="cd02439">
    <property type="entry name" value="DMB-PRT_CobT"/>
    <property type="match status" value="1"/>
</dbReference>
<dbReference type="Gene3D" id="3.40.50.10210">
    <property type="match status" value="1"/>
</dbReference>
<dbReference type="HAMAP" id="MF_01086">
    <property type="entry name" value="UPF0284"/>
    <property type="match status" value="1"/>
</dbReference>
<dbReference type="InterPro" id="IPR003200">
    <property type="entry name" value="Nict_dMeBzImd_PRibTrfase"/>
</dbReference>
<dbReference type="InterPro" id="IPR002805">
    <property type="entry name" value="Nict_dMeBzImd_PRibTrfase_arc"/>
</dbReference>
<dbReference type="InterPro" id="IPR036087">
    <property type="entry name" value="Nict_dMeBzImd_PRibTrfase_sf"/>
</dbReference>
<dbReference type="NCBIfam" id="NF003369">
    <property type="entry name" value="PRK04447.1-2"/>
    <property type="match status" value="1"/>
</dbReference>
<dbReference type="PANTHER" id="PTHR38811">
    <property type="match status" value="1"/>
</dbReference>
<dbReference type="PANTHER" id="PTHR38811:SF1">
    <property type="entry name" value="UPF0284 PROTEIN SLL1500"/>
    <property type="match status" value="1"/>
</dbReference>
<dbReference type="Pfam" id="PF02277">
    <property type="entry name" value="DBI_PRT"/>
    <property type="match status" value="1"/>
</dbReference>
<dbReference type="SUPFAM" id="SSF52733">
    <property type="entry name" value="Nicotinate mononucleotide:5,6-dimethylbenzimidazole phosphoribosyltransferase (CobT)"/>
    <property type="match status" value="1"/>
</dbReference>
<gene>
    <name type="ordered locus">P9215_05181</name>
</gene>
<reference key="1">
    <citation type="journal article" date="2007" name="PLoS Genet.">
        <title>Patterns and implications of gene gain and loss in the evolution of Prochlorococcus.</title>
        <authorList>
            <person name="Kettler G.C."/>
            <person name="Martiny A.C."/>
            <person name="Huang K."/>
            <person name="Zucker J."/>
            <person name="Coleman M.L."/>
            <person name="Rodrigue S."/>
            <person name="Chen F."/>
            <person name="Lapidus A."/>
            <person name="Ferriera S."/>
            <person name="Johnson J."/>
            <person name="Steglich C."/>
            <person name="Church G.M."/>
            <person name="Richardson P."/>
            <person name="Chisholm S.W."/>
        </authorList>
    </citation>
    <scope>NUCLEOTIDE SEQUENCE [LARGE SCALE GENOMIC DNA]</scope>
    <source>
        <strain>MIT 9215</strain>
    </source>
</reference>
<feature type="chain" id="PRO_1000064864" description="UPF0284 protein P9215_05181">
    <location>
        <begin position="1"/>
        <end position="385"/>
    </location>
</feature>
<name>Y518_PROM2</name>
<organism>
    <name type="scientific">Prochlorococcus marinus (strain MIT 9215)</name>
    <dbReference type="NCBI Taxonomy" id="93060"/>
    <lineage>
        <taxon>Bacteria</taxon>
        <taxon>Bacillati</taxon>
        <taxon>Cyanobacteriota</taxon>
        <taxon>Cyanophyceae</taxon>
        <taxon>Synechococcales</taxon>
        <taxon>Prochlorococcaceae</taxon>
        <taxon>Prochlorococcus</taxon>
    </lineage>
</organism>
<accession>A8G3F3</accession>
<sequence>MYSKELGINFFGNESNKKNQLNKIEILKKNINNFKIFLVIAGTNTSQISGISAAGINAKSRRKTALADAEFLLKGASKDHKYKLPLLNAGVTPALISHVCAKLINIHPVIVPLGLGVKPYFNHLVVEDRDLGPSNCLTTGKSMSKKRVINLYEKGLAIGKSSKQPILISESVPGGTTTAQAVMEAFGLRVANLVGSSLFKAPRELRKKVVQKGLLNANLKTDFDSFDVVAAVGDPFQAFSMGLLIGARLAKQSVILSGGSQMLAIILLVLEFLDLKNEDDFIEDVFIATTGWLVKDNSLSDLLDIINEKYDVKLLGLASPLNFKFSKYKELKDYELGHVKEGVGAGGISLLAFLDGFKNEEIVSLCQQNLEMMKVLGQISLEKDC</sequence>
<proteinExistence type="inferred from homology"/>
<protein>
    <recommendedName>
        <fullName evidence="1">UPF0284 protein P9215_05181</fullName>
    </recommendedName>
</protein>
<comment type="similarity">
    <text evidence="1">Belongs to the UPF0284 family.</text>
</comment>
<evidence type="ECO:0000255" key="1">
    <source>
        <dbReference type="HAMAP-Rule" id="MF_01086"/>
    </source>
</evidence>